<sequence length="529" mass="60238">MSSGLIYISLEVLVACLITALIMYYVMKKIYYARGQAALKSASAKAKLMEFQAKSFVEAEEVRMKSQECKLQQQYENKNLQLKTHFEKKEVHLKHLEAQHKEFVRDEKRYLEKEKKELEKERQILEQEKENFKKQRVVCKEAQAKALDAMLNYMAYTKDEIKNMILEQLEEELEAQKSALIRRYEKEAKEEGKKKSYAILAEATARFAGNYATENLTTRIALPCSDYIGRVIGKDGKNIEAFKKVSGVDIEFSEDSSELCLSSFNLYRREVASETLKILIEDGRIQPNRIEEVYHRVARNLEKELLSEGESVVLELELGAMEDELKILIGKMRYRSSFGQNALQHSKEVALLAGLIAEQLGGDKKLARRAGILHDIGKALTQELGRDHVNLGVEVCKRHKEDPVVINAIYAHHGHEEILSVECASVCAADALSAGRPGARRKSDEEYAKRMQALEEIALEFDGVEKAYAMESGRELRVIVKSNQVRDNQVPIIARKIAKKIEESAQYVGEVGVQVVRENRFKTTATLKQ</sequence>
<organism>
    <name type="scientific">Helicobacter pylori (strain HPAG1)</name>
    <dbReference type="NCBI Taxonomy" id="357544"/>
    <lineage>
        <taxon>Bacteria</taxon>
        <taxon>Pseudomonadati</taxon>
        <taxon>Campylobacterota</taxon>
        <taxon>Epsilonproteobacteria</taxon>
        <taxon>Campylobacterales</taxon>
        <taxon>Helicobacteraceae</taxon>
        <taxon>Helicobacter</taxon>
    </lineage>
</organism>
<keyword id="KW-1003">Cell membrane</keyword>
<keyword id="KW-0255">Endonuclease</keyword>
<keyword id="KW-0378">Hydrolase</keyword>
<keyword id="KW-0472">Membrane</keyword>
<keyword id="KW-0540">Nuclease</keyword>
<keyword id="KW-0694">RNA-binding</keyword>
<keyword id="KW-0812">Transmembrane</keyword>
<keyword id="KW-1133">Transmembrane helix</keyword>
<evidence type="ECO:0000255" key="1">
    <source>
        <dbReference type="HAMAP-Rule" id="MF_00335"/>
    </source>
</evidence>
<evidence type="ECO:0000255" key="2">
    <source>
        <dbReference type="PROSITE-ProRule" id="PRU01175"/>
    </source>
</evidence>
<reference key="1">
    <citation type="journal article" date="2006" name="Proc. Natl. Acad. Sci. U.S.A.">
        <title>The complete genome sequence of a chronic atrophic gastritis Helicobacter pylori strain: evolution during disease progression.</title>
        <authorList>
            <person name="Oh J.D."/>
            <person name="Kling-Baeckhed H."/>
            <person name="Giannakis M."/>
            <person name="Xu J."/>
            <person name="Fulton R.S."/>
            <person name="Fulton L.A."/>
            <person name="Cordum H.S."/>
            <person name="Wang C."/>
            <person name="Elliott G."/>
            <person name="Edwards J."/>
            <person name="Mardis E.R."/>
            <person name="Engstrand L.G."/>
            <person name="Gordon J.I."/>
        </authorList>
    </citation>
    <scope>NUCLEOTIDE SEQUENCE [LARGE SCALE GENOMIC DNA]</scope>
    <source>
        <strain>HPAG1</strain>
    </source>
</reference>
<dbReference type="EC" id="3.1.-.-" evidence="1"/>
<dbReference type="EMBL" id="CP000241">
    <property type="protein sequence ID" value="ABF84812.1"/>
    <property type="molecule type" value="Genomic_DNA"/>
</dbReference>
<dbReference type="SMR" id="Q1CTB0"/>
<dbReference type="KEGG" id="hpa:HPAG1_0745"/>
<dbReference type="HOGENOM" id="CLU_028328_1_0_7"/>
<dbReference type="GO" id="GO:0005886">
    <property type="term" value="C:plasma membrane"/>
    <property type="evidence" value="ECO:0007669"/>
    <property type="project" value="UniProtKB-SubCell"/>
</dbReference>
<dbReference type="GO" id="GO:0003723">
    <property type="term" value="F:RNA binding"/>
    <property type="evidence" value="ECO:0007669"/>
    <property type="project" value="UniProtKB-UniRule"/>
</dbReference>
<dbReference type="GO" id="GO:0004521">
    <property type="term" value="F:RNA endonuclease activity"/>
    <property type="evidence" value="ECO:0007669"/>
    <property type="project" value="UniProtKB-UniRule"/>
</dbReference>
<dbReference type="GO" id="GO:0006402">
    <property type="term" value="P:mRNA catabolic process"/>
    <property type="evidence" value="ECO:0007669"/>
    <property type="project" value="UniProtKB-UniRule"/>
</dbReference>
<dbReference type="CDD" id="cd00077">
    <property type="entry name" value="HDc"/>
    <property type="match status" value="1"/>
</dbReference>
<dbReference type="CDD" id="cd22431">
    <property type="entry name" value="KH-I_RNaseY"/>
    <property type="match status" value="1"/>
</dbReference>
<dbReference type="FunFam" id="1.10.3210.10:FF:000013">
    <property type="entry name" value="Ribonuclease Y"/>
    <property type="match status" value="1"/>
</dbReference>
<dbReference type="FunFam" id="3.30.310.210:FF:000007">
    <property type="entry name" value="Ribonuclease Y"/>
    <property type="match status" value="1"/>
</dbReference>
<dbReference type="Gene3D" id="3.30.310.210">
    <property type="match status" value="1"/>
</dbReference>
<dbReference type="Gene3D" id="1.10.3210.10">
    <property type="entry name" value="Hypothetical protein af1432"/>
    <property type="match status" value="1"/>
</dbReference>
<dbReference type="HAMAP" id="MF_00335">
    <property type="entry name" value="RNase_Y"/>
    <property type="match status" value="1"/>
</dbReference>
<dbReference type="InterPro" id="IPR003607">
    <property type="entry name" value="HD/PDEase_dom"/>
</dbReference>
<dbReference type="InterPro" id="IPR006674">
    <property type="entry name" value="HD_domain"/>
</dbReference>
<dbReference type="InterPro" id="IPR006675">
    <property type="entry name" value="HDIG_dom"/>
</dbReference>
<dbReference type="InterPro" id="IPR004087">
    <property type="entry name" value="KH_dom"/>
</dbReference>
<dbReference type="InterPro" id="IPR004088">
    <property type="entry name" value="KH_dom_type_1"/>
</dbReference>
<dbReference type="InterPro" id="IPR036612">
    <property type="entry name" value="KH_dom_type_1_sf"/>
</dbReference>
<dbReference type="InterPro" id="IPR017705">
    <property type="entry name" value="Ribonuclease_Y"/>
</dbReference>
<dbReference type="InterPro" id="IPR022711">
    <property type="entry name" value="RNase_Y_N"/>
</dbReference>
<dbReference type="NCBIfam" id="TIGR00277">
    <property type="entry name" value="HDIG"/>
    <property type="match status" value="1"/>
</dbReference>
<dbReference type="NCBIfam" id="TIGR03319">
    <property type="entry name" value="RNase_Y"/>
    <property type="match status" value="1"/>
</dbReference>
<dbReference type="PANTHER" id="PTHR12826">
    <property type="entry name" value="RIBONUCLEASE Y"/>
    <property type="match status" value="1"/>
</dbReference>
<dbReference type="PANTHER" id="PTHR12826:SF15">
    <property type="entry name" value="RIBONUCLEASE Y"/>
    <property type="match status" value="1"/>
</dbReference>
<dbReference type="Pfam" id="PF01966">
    <property type="entry name" value="HD"/>
    <property type="match status" value="1"/>
</dbReference>
<dbReference type="Pfam" id="PF00013">
    <property type="entry name" value="KH_1"/>
    <property type="match status" value="1"/>
</dbReference>
<dbReference type="Pfam" id="PF12072">
    <property type="entry name" value="RNase_Y_N"/>
    <property type="match status" value="1"/>
</dbReference>
<dbReference type="SMART" id="SM00471">
    <property type="entry name" value="HDc"/>
    <property type="match status" value="1"/>
</dbReference>
<dbReference type="SMART" id="SM00322">
    <property type="entry name" value="KH"/>
    <property type="match status" value="1"/>
</dbReference>
<dbReference type="SUPFAM" id="SSF54791">
    <property type="entry name" value="Eukaryotic type KH-domain (KH-domain type I)"/>
    <property type="match status" value="1"/>
</dbReference>
<dbReference type="SUPFAM" id="SSF109604">
    <property type="entry name" value="HD-domain/PDEase-like"/>
    <property type="match status" value="1"/>
</dbReference>
<dbReference type="PROSITE" id="PS51831">
    <property type="entry name" value="HD"/>
    <property type="match status" value="1"/>
</dbReference>
<dbReference type="PROSITE" id="PS50084">
    <property type="entry name" value="KH_TYPE_1"/>
    <property type="match status" value="1"/>
</dbReference>
<name>RNY_HELPH</name>
<gene>
    <name evidence="1" type="primary">rny</name>
    <name type="ordered locus">HPAG1_0745</name>
</gene>
<protein>
    <recommendedName>
        <fullName evidence="1">Ribonuclease Y</fullName>
        <shortName evidence="1">RNase Y</shortName>
        <ecNumber evidence="1">3.1.-.-</ecNumber>
    </recommendedName>
</protein>
<proteinExistence type="inferred from homology"/>
<feature type="chain" id="PRO_0000344886" description="Ribonuclease Y">
    <location>
        <begin position="1"/>
        <end position="529"/>
    </location>
</feature>
<feature type="transmembrane region" description="Helical" evidence="1">
    <location>
        <begin position="4"/>
        <end position="24"/>
    </location>
</feature>
<feature type="domain" description="KH" evidence="1">
    <location>
        <begin position="216"/>
        <end position="297"/>
    </location>
</feature>
<feature type="domain" description="HD" evidence="2">
    <location>
        <begin position="342"/>
        <end position="435"/>
    </location>
</feature>
<accession>Q1CTB0</accession>
<comment type="function">
    <text evidence="1">Endoribonuclease that initiates mRNA decay.</text>
</comment>
<comment type="subcellular location">
    <subcellularLocation>
        <location evidence="1">Cell membrane</location>
        <topology evidence="1">Single-pass membrane protein</topology>
    </subcellularLocation>
</comment>
<comment type="similarity">
    <text evidence="1">Belongs to the RNase Y family.</text>
</comment>